<comment type="function">
    <text evidence="1">Plays a role in endosomal protein trafficking and in targeting proteins for lysosomal degradation. May also contribute to the regulation of gene expression in the nucleus. Binds DNA (in vitro) and may play a synergistic role in the nucleus in regulating the expression of numerous cytokines.</text>
</comment>
<comment type="subcellular location">
    <subcellularLocation>
        <location evidence="1">Cytoplasm</location>
    </subcellularLocation>
    <subcellularLocation>
        <location evidence="1">Nucleus</location>
    </subcellularLocation>
    <subcellularLocation>
        <location evidence="1">Lysosome membrane</location>
        <topology evidence="1">Peripheral membrane protein</topology>
        <orientation evidence="1">Cytoplasmic side</orientation>
    </subcellularLocation>
    <subcellularLocation>
        <location evidence="1">Early endosome membrane</location>
    </subcellularLocation>
    <subcellularLocation>
        <location evidence="1">Late endosome membrane</location>
    </subcellularLocation>
    <subcellularLocation>
        <location evidence="1">Endosome membrane</location>
        <topology evidence="1">Peripheral membrane protein</topology>
        <orientation evidence="1">Cytoplasmic side</orientation>
    </subcellularLocation>
    <subcellularLocation>
        <location evidence="1">Cell membrane</location>
        <topology evidence="1">Peripheral membrane protein</topology>
        <orientation evidence="1">Cytoplasmic side</orientation>
    </subcellularLocation>
    <subcellularLocation>
        <location evidence="1">Golgi apparatus membrane</location>
    </subcellularLocation>
    <text evidence="1 2">Associated with membranes of lysosomes, early and late endosomes. Can translocate from the cytoplasm into the nucleus (By similarity). Detected at Schmidt-Lanterman incisures and in nodal regions of myelinating Schwann cells (By similarity).</text>
</comment>
<comment type="domain">
    <text evidence="1">The LITAF domain is stabilized by a bound zinc ion. The LITAF domain contains an amphipathic helix that mediates interaction with lipid membranes.</text>
</comment>
<comment type="similarity">
    <text evidence="5">Belongs to the CDIP1/LITAF family.</text>
</comment>
<name>LITAF_DANRE</name>
<evidence type="ECO:0000250" key="1">
    <source>
        <dbReference type="UniProtKB" id="Q99732"/>
    </source>
</evidence>
<evidence type="ECO:0000250" key="2">
    <source>
        <dbReference type="UniProtKB" id="Q9JLJ0"/>
    </source>
</evidence>
<evidence type="ECO:0000255" key="3">
    <source>
        <dbReference type="PROSITE-ProRule" id="PRU01181"/>
    </source>
</evidence>
<evidence type="ECO:0000256" key="4">
    <source>
        <dbReference type="SAM" id="MobiDB-lite"/>
    </source>
</evidence>
<evidence type="ECO:0000305" key="5"/>
<keyword id="KW-1003">Cell membrane</keyword>
<keyword id="KW-0963">Cytoplasm</keyword>
<keyword id="KW-0238">DNA-binding</keyword>
<keyword id="KW-0967">Endosome</keyword>
<keyword id="KW-0333">Golgi apparatus</keyword>
<keyword id="KW-0458">Lysosome</keyword>
<keyword id="KW-0472">Membrane</keyword>
<keyword id="KW-0479">Metal-binding</keyword>
<keyword id="KW-0539">Nucleus</keyword>
<keyword id="KW-1185">Reference proteome</keyword>
<keyword id="KW-0804">Transcription</keyword>
<keyword id="KW-0805">Transcription regulation</keyword>
<keyword id="KW-0862">Zinc</keyword>
<feature type="chain" id="PRO_0000084444" description="Lipopolysaccharide-induced tumor necrosis factor-alpha factor homolog">
    <location>
        <begin position="1"/>
        <end position="163"/>
    </location>
</feature>
<feature type="domain" description="LITAF" evidence="3">
    <location>
        <begin position="78"/>
        <end position="162"/>
    </location>
</feature>
<feature type="region of interest" description="Disordered" evidence="4">
    <location>
        <begin position="1"/>
        <end position="23"/>
    </location>
</feature>
<feature type="region of interest" description="Membrane-binding amphipathic helix" evidence="5">
    <location>
        <begin position="116"/>
        <end position="136"/>
    </location>
</feature>
<feature type="short sequence motif" description="PPxY motif" evidence="1">
    <location>
        <begin position="22"/>
        <end position="25"/>
    </location>
</feature>
<feature type="binding site" evidence="1">
    <location>
        <position position="98"/>
    </location>
    <ligand>
        <name>Zn(2+)</name>
        <dbReference type="ChEBI" id="CHEBI:29105"/>
    </ligand>
</feature>
<feature type="binding site" evidence="1">
    <location>
        <position position="101"/>
    </location>
    <ligand>
        <name>Zn(2+)</name>
        <dbReference type="ChEBI" id="CHEBI:29105"/>
    </ligand>
</feature>
<feature type="binding site" evidence="1">
    <location>
        <position position="150"/>
    </location>
    <ligand>
        <name>Zn(2+)</name>
        <dbReference type="ChEBI" id="CHEBI:29105"/>
    </ligand>
</feature>
<feature type="binding site" evidence="1">
    <location>
        <position position="153"/>
    </location>
    <ligand>
        <name>Zn(2+)</name>
        <dbReference type="ChEBI" id="CHEBI:29105"/>
    </ligand>
</feature>
<organism>
    <name type="scientific">Danio rerio</name>
    <name type="common">Zebrafish</name>
    <name type="synonym">Brachydanio rerio</name>
    <dbReference type="NCBI Taxonomy" id="7955"/>
    <lineage>
        <taxon>Eukaryota</taxon>
        <taxon>Metazoa</taxon>
        <taxon>Chordata</taxon>
        <taxon>Craniata</taxon>
        <taxon>Vertebrata</taxon>
        <taxon>Euteleostomi</taxon>
        <taxon>Actinopterygii</taxon>
        <taxon>Neopterygii</taxon>
        <taxon>Teleostei</taxon>
        <taxon>Ostariophysi</taxon>
        <taxon>Cypriniformes</taxon>
        <taxon>Danionidae</taxon>
        <taxon>Danioninae</taxon>
        <taxon>Danio</taxon>
    </lineage>
</organism>
<dbReference type="EMBL" id="BC074085">
    <property type="protein sequence ID" value="AAH74085.1"/>
    <property type="molecule type" value="mRNA"/>
</dbReference>
<dbReference type="RefSeq" id="NP_001002184.1">
    <property type="nucleotide sequence ID" value="NM_001002184.1"/>
</dbReference>
<dbReference type="FunCoup" id="Q6GMG8">
    <property type="interactions" value="312"/>
</dbReference>
<dbReference type="STRING" id="7955.ENSDARP00000130720"/>
<dbReference type="PaxDb" id="7955-ENSDARP00000069049"/>
<dbReference type="Ensembl" id="ENSDART00000157619">
    <property type="protein sequence ID" value="ENSDARP00000130720"/>
    <property type="gene ID" value="ENSDARG00000103483"/>
</dbReference>
<dbReference type="GeneID" id="431731"/>
<dbReference type="KEGG" id="dre:431731"/>
<dbReference type="AGR" id="ZFIN:ZDB-GENE-040704-23"/>
<dbReference type="CTD" id="9516"/>
<dbReference type="ZFIN" id="ZDB-GENE-040704-23">
    <property type="gene designation" value="litaf"/>
</dbReference>
<dbReference type="eggNOG" id="ENOG502S2GM">
    <property type="taxonomic scope" value="Eukaryota"/>
</dbReference>
<dbReference type="HOGENOM" id="CLU_095549_3_0_1"/>
<dbReference type="InParanoid" id="Q6GMG8"/>
<dbReference type="OMA" id="VTFYDRP"/>
<dbReference type="OrthoDB" id="4713066at2759"/>
<dbReference type="PhylomeDB" id="Q6GMG8"/>
<dbReference type="TreeFam" id="TF313294"/>
<dbReference type="PRO" id="PR:Q6GMG8"/>
<dbReference type="Proteomes" id="UP000000437">
    <property type="component" value="Chromosome 3"/>
</dbReference>
<dbReference type="Bgee" id="ENSDARG00000103483">
    <property type="expression patterns" value="Expressed in spleen and 30 other cell types or tissues"/>
</dbReference>
<dbReference type="ExpressionAtlas" id="Q6GMG8">
    <property type="expression patterns" value="baseline"/>
</dbReference>
<dbReference type="GO" id="GO:0098559">
    <property type="term" value="C:cytoplasmic side of early endosome membrane"/>
    <property type="evidence" value="ECO:0000250"/>
    <property type="project" value="UniProtKB"/>
</dbReference>
<dbReference type="GO" id="GO:0098560">
    <property type="term" value="C:cytoplasmic side of late endosome membrane"/>
    <property type="evidence" value="ECO:0000250"/>
    <property type="project" value="UniProtKB"/>
</dbReference>
<dbReference type="GO" id="GO:0098574">
    <property type="term" value="C:cytoplasmic side of lysosomal membrane"/>
    <property type="evidence" value="ECO:0000250"/>
    <property type="project" value="UniProtKB"/>
</dbReference>
<dbReference type="GO" id="GO:0009898">
    <property type="term" value="C:cytoplasmic side of plasma membrane"/>
    <property type="evidence" value="ECO:0000250"/>
    <property type="project" value="UniProtKB"/>
</dbReference>
<dbReference type="GO" id="GO:0000139">
    <property type="term" value="C:Golgi membrane"/>
    <property type="evidence" value="ECO:0007669"/>
    <property type="project" value="UniProtKB-SubCell"/>
</dbReference>
<dbReference type="GO" id="GO:0005634">
    <property type="term" value="C:nucleus"/>
    <property type="evidence" value="ECO:0000318"/>
    <property type="project" value="GO_Central"/>
</dbReference>
<dbReference type="GO" id="GO:0003677">
    <property type="term" value="F:DNA binding"/>
    <property type="evidence" value="ECO:0007669"/>
    <property type="project" value="UniProtKB-KW"/>
</dbReference>
<dbReference type="GO" id="GO:0008270">
    <property type="term" value="F:zinc ion binding"/>
    <property type="evidence" value="ECO:0000250"/>
    <property type="project" value="UniProtKB"/>
</dbReference>
<dbReference type="InterPro" id="IPR006629">
    <property type="entry name" value="LITAF"/>
</dbReference>
<dbReference type="InterPro" id="IPR037519">
    <property type="entry name" value="LITAF_fam"/>
</dbReference>
<dbReference type="PANTHER" id="PTHR23292">
    <property type="entry name" value="LIPOPOLYSACCHARIDE-INDUCED TUMOR NECROSIS FACTOR-ALPHA FACTOR"/>
    <property type="match status" value="1"/>
</dbReference>
<dbReference type="PANTHER" id="PTHR23292:SF45">
    <property type="entry name" value="LIPOPOLYSACCHARIDE-INDUCED TUMOR NECROSIS FACTOR-ALPHA FACTOR HOMOLOG"/>
    <property type="match status" value="1"/>
</dbReference>
<dbReference type="Pfam" id="PF10601">
    <property type="entry name" value="zf-LITAF-like"/>
    <property type="match status" value="1"/>
</dbReference>
<dbReference type="SMART" id="SM00714">
    <property type="entry name" value="LITAF"/>
    <property type="match status" value="1"/>
</dbReference>
<dbReference type="PROSITE" id="PS51837">
    <property type="entry name" value="LITAF"/>
    <property type="match status" value="1"/>
</dbReference>
<gene>
    <name type="primary">litaf</name>
    <name type="ORF">zgc:91882</name>
</gene>
<proteinExistence type="evidence at transcript level"/>
<sequence>MAMPMPTAPPMENTTLVGHPPPPSYDEISGANPYYPAGPYPPADMKASGPPPYPTQEYNQMYPPTAQGQPVTSPVVAVQTVYVQPGLVFGNVPVQAHCPVCSQSVITRLEYSSGPLVWLSCAGLAVFGCIYGCCLIPFCIEDLKDVTHHCPNCSSVLGVHKRF</sequence>
<reference key="1">
    <citation type="submission" date="2004-06" db="EMBL/GenBank/DDBJ databases">
        <authorList>
            <consortium name="NIH - Zebrafish Gene Collection (ZGC) project"/>
        </authorList>
    </citation>
    <scope>NUCLEOTIDE SEQUENCE [LARGE SCALE MRNA]</scope>
</reference>
<accession>Q6GMG8</accession>
<protein>
    <recommendedName>
        <fullName>Lipopolysaccharide-induced tumor necrosis factor-alpha factor homolog</fullName>
        <shortName>LPS-induced TNF-alpha factor homolog</shortName>
    </recommendedName>
</protein>